<name>AROL_ECOLI</name>
<comment type="function">
    <text evidence="4 5">Catalyzes the specific phosphorylation of the 3-hydroxyl group of shikimic acid using ATP as a cosubstrate.</text>
</comment>
<comment type="catalytic activity">
    <reaction evidence="4">
        <text>shikimate + ATP = 3-phosphoshikimate + ADP + H(+)</text>
        <dbReference type="Rhea" id="RHEA:13121"/>
        <dbReference type="ChEBI" id="CHEBI:15378"/>
        <dbReference type="ChEBI" id="CHEBI:30616"/>
        <dbReference type="ChEBI" id="CHEBI:36208"/>
        <dbReference type="ChEBI" id="CHEBI:145989"/>
        <dbReference type="ChEBI" id="CHEBI:456216"/>
        <dbReference type="EC" id="2.7.1.71"/>
    </reaction>
</comment>
<comment type="cofactor">
    <cofactor evidence="4">
        <name>Mg(2+)</name>
        <dbReference type="ChEBI" id="CHEBI:18420"/>
    </cofactor>
    <text evidence="4">Binds 1 Mg(2+) ion per subunit.</text>
</comment>
<comment type="biophysicochemical properties">
    <kinetics>
        <KM evidence="4">200 uM for shikimate</KM>
        <KM evidence="4">160 uM for ATP</KM>
    </kinetics>
</comment>
<comment type="pathway">
    <text evidence="8">Metabolic intermediate biosynthesis; chorismate biosynthesis; chorismate from D-erythrose 4-phosphate and phosphoenolpyruvate: step 5/7.</text>
</comment>
<comment type="subunit">
    <text evidence="5">Monomer.</text>
</comment>
<comment type="subcellular location">
    <subcellularLocation>
        <location evidence="1">Cytoplasm</location>
    </subcellularLocation>
</comment>
<comment type="induction">
    <text evidence="2 3 6">Expressed under the control of TyrR and TrpR repressors.</text>
</comment>
<comment type="domain">
    <text evidence="1">The LID domain closes over the active site upon ATP binding.</text>
</comment>
<comment type="miscellaneous">
    <text>Two isozymes have been found in E.coli. AroK has 100-fold lower affinity for shikimate than AroL, suggesting that AroL is the dominant enzyme in the biosynthesis of the aromatic amino acids, with AroK playing a secondary role and possibly participating in an as yet unidentified cellular process.</text>
</comment>
<comment type="similarity">
    <text evidence="7">Belongs to the shikimate kinase family. AroL subfamily.</text>
</comment>
<reference key="1">
    <citation type="journal article" date="1986" name="Biochem. J.">
        <title>The cloning and expression of the aroL gene from Escherichia coli K12. Purification and complete amino acid sequence of shikimate kinase II, the aroL-gene product.</title>
        <authorList>
            <person name="Millar G."/>
            <person name="Lewendon A."/>
            <person name="Hunter M.G."/>
            <person name="Coggins J.R."/>
        </authorList>
    </citation>
    <scope>NUCLEOTIDE SEQUENCE [GENOMIC DNA]</scope>
    <scope>PROTEIN SEQUENCE OF 2-25</scope>
    <scope>FUNCTION</scope>
    <scope>SUBUNIT</scope>
    <source>
        <strain>K12</strain>
    </source>
</reference>
<reference key="2">
    <citation type="journal article" date="1986" name="J. Bacteriol.">
        <title>Nucleotide sequence of the transcription unit containing the aroL and aroM genes from Escherichia coli K-12.</title>
        <authorList>
            <person name="Defeyter R.C."/>
            <person name="Davidson B.E."/>
            <person name="Pittard J."/>
        </authorList>
    </citation>
    <scope>NUCLEOTIDE SEQUENCE [GENOMIC DNA]</scope>
    <source>
        <strain>K12</strain>
    </source>
</reference>
<reference key="3">
    <citation type="submission" date="1997-01" db="EMBL/GenBank/DDBJ databases">
        <title>Sequence of minutes 4-25 of Escherichia coli.</title>
        <authorList>
            <person name="Chung E."/>
            <person name="Allen E."/>
            <person name="Araujo R."/>
            <person name="Aparicio A.M."/>
            <person name="Davis K."/>
            <person name="Duncan M."/>
            <person name="Federspiel N."/>
            <person name="Hyman R."/>
            <person name="Kalman S."/>
            <person name="Komp C."/>
            <person name="Kurdi O."/>
            <person name="Lew H."/>
            <person name="Lin D."/>
            <person name="Namath A."/>
            <person name="Oefner P."/>
            <person name="Roberts D."/>
            <person name="Schramm S."/>
            <person name="Davis R.W."/>
        </authorList>
    </citation>
    <scope>NUCLEOTIDE SEQUENCE [LARGE SCALE GENOMIC DNA]</scope>
    <source>
        <strain>K12 / MG1655 / ATCC 47076</strain>
    </source>
</reference>
<reference key="4">
    <citation type="journal article" date="1997" name="Science">
        <title>The complete genome sequence of Escherichia coli K-12.</title>
        <authorList>
            <person name="Blattner F.R."/>
            <person name="Plunkett G. III"/>
            <person name="Bloch C.A."/>
            <person name="Perna N.T."/>
            <person name="Burland V."/>
            <person name="Riley M."/>
            <person name="Collado-Vides J."/>
            <person name="Glasner J.D."/>
            <person name="Rode C.K."/>
            <person name="Mayhew G.F."/>
            <person name="Gregor J."/>
            <person name="Davis N.W."/>
            <person name="Kirkpatrick H.A."/>
            <person name="Goeden M.A."/>
            <person name="Rose D.J."/>
            <person name="Mau B."/>
            <person name="Shao Y."/>
        </authorList>
    </citation>
    <scope>NUCLEOTIDE SEQUENCE [LARGE SCALE GENOMIC DNA]</scope>
    <source>
        <strain>K12 / MG1655 / ATCC 47076</strain>
    </source>
</reference>
<reference key="5">
    <citation type="journal article" date="2006" name="Mol. Syst. Biol.">
        <title>Highly accurate genome sequences of Escherichia coli K-12 strains MG1655 and W3110.</title>
        <authorList>
            <person name="Hayashi K."/>
            <person name="Morooka N."/>
            <person name="Yamamoto Y."/>
            <person name="Fujita K."/>
            <person name="Isono K."/>
            <person name="Choi S."/>
            <person name="Ohtsubo E."/>
            <person name="Baba T."/>
            <person name="Wanner B.L."/>
            <person name="Mori H."/>
            <person name="Horiuchi T."/>
        </authorList>
    </citation>
    <scope>NUCLEOTIDE SEQUENCE [LARGE SCALE GENOMIC DNA]</scope>
    <source>
        <strain>K12 / W3110 / ATCC 27325 / DSM 5911</strain>
    </source>
</reference>
<reference key="6">
    <citation type="journal article" date="1986" name="J. Bacteriol.">
        <title>Purification and properties of shikimate kinase II from Escherichia coli K-12.</title>
        <authorList>
            <person name="DeFeyter R.C."/>
            <person name="Pittard J."/>
        </authorList>
    </citation>
    <scope>PROTEIN SEQUENCE OF 2-9</scope>
    <scope>FUNCTION</scope>
    <scope>COFACTOR</scope>
    <scope>KINETIC PARAMETERS</scope>
    <scope>CATALYTIC ACTIVITY</scope>
    <source>
        <strain>K12</strain>
    </source>
</reference>
<reference key="7">
    <citation type="journal article" date="1986" name="J. Bacteriol.">
        <title>Genetic and molecular analysis of aroL, the gene for shikimate kinase II in Escherichia coli K-12.</title>
        <authorList>
            <person name="DeFeyter R.C."/>
            <person name="Pittard J."/>
        </authorList>
    </citation>
    <scope>INDUCTION</scope>
    <source>
        <strain>K12</strain>
    </source>
</reference>
<reference key="8">
    <citation type="journal article" date="1992" name="J. Bacteriol.">
        <title>Synergism between the Trp repressor and Tyr repressor in repression of the aroL promoter of Escherichia coli K-12.</title>
        <authorList>
            <person name="Heatwole V.M."/>
            <person name="Somerville R.L."/>
        </authorList>
    </citation>
    <scope>INDUCTION</scope>
    <source>
        <strain>K12</strain>
    </source>
</reference>
<reference key="9">
    <citation type="journal article" date="1994" name="J. Bacteriol.">
        <title>Regulation of aroL expression by TyrR protein and Trp repressor in Escherichia coli K-12.</title>
        <authorList>
            <person name="Lawley B."/>
            <person name="Pittard A.J."/>
        </authorList>
    </citation>
    <scope>INDUCTION</scope>
    <source>
        <strain>K12</strain>
    </source>
</reference>
<proteinExistence type="evidence at protein level"/>
<organism>
    <name type="scientific">Escherichia coli (strain K12)</name>
    <dbReference type="NCBI Taxonomy" id="83333"/>
    <lineage>
        <taxon>Bacteria</taxon>
        <taxon>Pseudomonadati</taxon>
        <taxon>Pseudomonadota</taxon>
        <taxon>Gammaproteobacteria</taxon>
        <taxon>Enterobacterales</taxon>
        <taxon>Enterobacteriaceae</taxon>
        <taxon>Escherichia</taxon>
    </lineage>
</organism>
<evidence type="ECO:0000250" key="1"/>
<evidence type="ECO:0000269" key="2">
    <source>
    </source>
</evidence>
<evidence type="ECO:0000269" key="3">
    <source>
    </source>
</evidence>
<evidence type="ECO:0000269" key="4">
    <source>
    </source>
</evidence>
<evidence type="ECO:0000269" key="5">
    <source>
    </source>
</evidence>
<evidence type="ECO:0000269" key="6">
    <source>
    </source>
</evidence>
<evidence type="ECO:0000305" key="7"/>
<evidence type="ECO:0000305" key="8">
    <source>
    </source>
</evidence>
<sequence>MTQPLFLIGPRGCGKTTVGMALADSLNRRFVDTDQWLQSQLNMTVAEIVEREEWAGFRARETAALEAVTAPSTVIATGGGIILTEFNRHFMQNNGIVVYLCAPVSVLVNRLQAAPEEDLRPTLTGKPLSEEVQEVLEERDALYREVAHIIIDATNEPSQVISEIRSALAQTINC</sequence>
<feature type="initiator methionine" description="Removed" evidence="4 5">
    <location>
        <position position="1"/>
    </location>
</feature>
<feature type="chain" id="PRO_0000192378" description="Shikimate kinase 2">
    <location>
        <begin position="2"/>
        <end position="174"/>
    </location>
</feature>
<feature type="region of interest" description="LID domain">
    <location>
        <begin position="112"/>
        <end position="126"/>
    </location>
</feature>
<feature type="binding site" evidence="1">
    <location>
        <begin position="12"/>
        <end position="17"/>
    </location>
    <ligand>
        <name>ATP</name>
        <dbReference type="ChEBI" id="CHEBI:30616"/>
    </ligand>
</feature>
<feature type="binding site" evidence="1">
    <location>
        <position position="16"/>
    </location>
    <ligand>
        <name>Mg(2+)</name>
        <dbReference type="ChEBI" id="CHEBI:18420"/>
    </ligand>
</feature>
<feature type="binding site" evidence="1">
    <location>
        <position position="32"/>
    </location>
    <ligand>
        <name>Mg(2+)</name>
        <dbReference type="ChEBI" id="CHEBI:18420"/>
    </ligand>
</feature>
<feature type="binding site" evidence="1">
    <location>
        <position position="34"/>
    </location>
    <ligand>
        <name>substrate</name>
    </ligand>
</feature>
<feature type="binding site" evidence="1">
    <location>
        <position position="58"/>
    </location>
    <ligand>
        <name>substrate</name>
    </ligand>
</feature>
<feature type="binding site" evidence="1">
    <location>
        <position position="79"/>
    </location>
    <ligand>
        <name>substrate</name>
    </ligand>
</feature>
<feature type="binding site" evidence="1">
    <location>
        <position position="120"/>
    </location>
    <ligand>
        <name>ATP</name>
        <dbReference type="ChEBI" id="CHEBI:30616"/>
    </ligand>
</feature>
<feature type="binding site" evidence="1">
    <location>
        <position position="139"/>
    </location>
    <ligand>
        <name>substrate</name>
    </ligand>
</feature>
<keyword id="KW-0028">Amino-acid biosynthesis</keyword>
<keyword id="KW-0057">Aromatic amino acid biosynthesis</keyword>
<keyword id="KW-0067">ATP-binding</keyword>
<keyword id="KW-0963">Cytoplasm</keyword>
<keyword id="KW-0903">Direct protein sequencing</keyword>
<keyword id="KW-0418">Kinase</keyword>
<keyword id="KW-0460">Magnesium</keyword>
<keyword id="KW-0479">Metal-binding</keyword>
<keyword id="KW-0547">Nucleotide-binding</keyword>
<keyword id="KW-1185">Reference proteome</keyword>
<keyword id="KW-0808">Transferase</keyword>
<dbReference type="EC" id="2.7.1.71" evidence="4"/>
<dbReference type="EMBL" id="X04064">
    <property type="protein sequence ID" value="CAA27696.1"/>
    <property type="molecule type" value="Genomic_DNA"/>
</dbReference>
<dbReference type="EMBL" id="M13045">
    <property type="protein sequence ID" value="AAA83833.1"/>
    <property type="molecule type" value="Genomic_DNA"/>
</dbReference>
<dbReference type="EMBL" id="U73857">
    <property type="protein sequence ID" value="AAB18112.1"/>
    <property type="molecule type" value="Genomic_DNA"/>
</dbReference>
<dbReference type="EMBL" id="U00096">
    <property type="protein sequence ID" value="AAC73491.1"/>
    <property type="molecule type" value="Genomic_DNA"/>
</dbReference>
<dbReference type="EMBL" id="AP009048">
    <property type="protein sequence ID" value="BAE76169.1"/>
    <property type="molecule type" value="Genomic_DNA"/>
</dbReference>
<dbReference type="PIR" id="A90333">
    <property type="entry name" value="KIECS"/>
</dbReference>
<dbReference type="RefSeq" id="NP_414922.1">
    <property type="nucleotide sequence ID" value="NC_000913.3"/>
</dbReference>
<dbReference type="RefSeq" id="WP_000193393.1">
    <property type="nucleotide sequence ID" value="NZ_STEB01000007.1"/>
</dbReference>
<dbReference type="SMR" id="P0A6E1"/>
<dbReference type="BioGRID" id="4259831">
    <property type="interactions" value="9"/>
</dbReference>
<dbReference type="FunCoup" id="P0A6E1">
    <property type="interactions" value="163"/>
</dbReference>
<dbReference type="IntAct" id="P0A6E1">
    <property type="interactions" value="3"/>
</dbReference>
<dbReference type="STRING" id="511145.b0388"/>
<dbReference type="jPOST" id="P0A6E1"/>
<dbReference type="PaxDb" id="511145-b0388"/>
<dbReference type="EnsemblBacteria" id="AAC73491">
    <property type="protein sequence ID" value="AAC73491"/>
    <property type="gene ID" value="b0388"/>
</dbReference>
<dbReference type="GeneID" id="93777073"/>
<dbReference type="GeneID" id="945031"/>
<dbReference type="KEGG" id="ecj:JW0379"/>
<dbReference type="KEGG" id="eco:b0388"/>
<dbReference type="KEGG" id="ecoc:C3026_01880"/>
<dbReference type="PATRIC" id="fig|1411691.4.peg.1890"/>
<dbReference type="EchoBASE" id="EB0080"/>
<dbReference type="eggNOG" id="COG0703">
    <property type="taxonomic scope" value="Bacteria"/>
</dbReference>
<dbReference type="HOGENOM" id="CLU_057607_4_3_6"/>
<dbReference type="InParanoid" id="P0A6E1"/>
<dbReference type="OMA" id="DTDIFMQ"/>
<dbReference type="OrthoDB" id="9800332at2"/>
<dbReference type="PhylomeDB" id="P0A6E1"/>
<dbReference type="BioCyc" id="EcoCyc:AROL-MONOMER"/>
<dbReference type="BioCyc" id="MetaCyc:AROL-MONOMER"/>
<dbReference type="SABIO-RK" id="P0A6E1"/>
<dbReference type="UniPathway" id="UPA00053">
    <property type="reaction ID" value="UER00088"/>
</dbReference>
<dbReference type="PRO" id="PR:P0A6E1"/>
<dbReference type="Proteomes" id="UP000000625">
    <property type="component" value="Chromosome"/>
</dbReference>
<dbReference type="GO" id="GO:0005829">
    <property type="term" value="C:cytosol"/>
    <property type="evidence" value="ECO:0000318"/>
    <property type="project" value="GO_Central"/>
</dbReference>
<dbReference type="GO" id="GO:0005524">
    <property type="term" value="F:ATP binding"/>
    <property type="evidence" value="ECO:0007669"/>
    <property type="project" value="UniProtKB-UniRule"/>
</dbReference>
<dbReference type="GO" id="GO:0000287">
    <property type="term" value="F:magnesium ion binding"/>
    <property type="evidence" value="ECO:0000314"/>
    <property type="project" value="EcoCyc"/>
</dbReference>
<dbReference type="GO" id="GO:0046872">
    <property type="term" value="F:metal ion binding"/>
    <property type="evidence" value="ECO:0000314"/>
    <property type="project" value="EcoCyc"/>
</dbReference>
<dbReference type="GO" id="GO:0004765">
    <property type="term" value="F:shikimate kinase activity"/>
    <property type="evidence" value="ECO:0000314"/>
    <property type="project" value="EcoCyc"/>
</dbReference>
<dbReference type="GO" id="GO:0008652">
    <property type="term" value="P:amino acid biosynthetic process"/>
    <property type="evidence" value="ECO:0007669"/>
    <property type="project" value="UniProtKB-KW"/>
</dbReference>
<dbReference type="GO" id="GO:0009073">
    <property type="term" value="P:aromatic amino acid family biosynthetic process"/>
    <property type="evidence" value="ECO:0000315"/>
    <property type="project" value="EcoliWiki"/>
</dbReference>
<dbReference type="GO" id="GO:0009423">
    <property type="term" value="P:chorismate biosynthetic process"/>
    <property type="evidence" value="ECO:0007669"/>
    <property type="project" value="UniProtKB-UniRule"/>
</dbReference>
<dbReference type="CDD" id="cd00464">
    <property type="entry name" value="SK"/>
    <property type="match status" value="1"/>
</dbReference>
<dbReference type="FunFam" id="3.40.50.300:FF:000408">
    <property type="entry name" value="Shikimate kinase 2"/>
    <property type="match status" value="1"/>
</dbReference>
<dbReference type="Gene3D" id="3.40.50.300">
    <property type="entry name" value="P-loop containing nucleotide triphosphate hydrolases"/>
    <property type="match status" value="1"/>
</dbReference>
<dbReference type="HAMAP" id="MF_00109">
    <property type="entry name" value="Shikimate_kinase"/>
    <property type="match status" value="1"/>
</dbReference>
<dbReference type="HAMAP" id="MF_01269">
    <property type="entry name" value="Shikimate_kinase_2"/>
    <property type="match status" value="1"/>
</dbReference>
<dbReference type="InterPro" id="IPR027417">
    <property type="entry name" value="P-loop_NTPase"/>
</dbReference>
<dbReference type="InterPro" id="IPR031322">
    <property type="entry name" value="Shikimate/glucono_kinase"/>
</dbReference>
<dbReference type="InterPro" id="IPR000623">
    <property type="entry name" value="Shikimate_kinase/TSH1"/>
</dbReference>
<dbReference type="InterPro" id="IPR027544">
    <property type="entry name" value="Shikimate_kinase_2"/>
</dbReference>
<dbReference type="InterPro" id="IPR023000">
    <property type="entry name" value="Shikimate_kinase_CS"/>
</dbReference>
<dbReference type="NCBIfam" id="NF002988">
    <property type="entry name" value="PRK03731.1"/>
    <property type="match status" value="1"/>
</dbReference>
<dbReference type="PANTHER" id="PTHR21087">
    <property type="entry name" value="SHIKIMATE KINASE"/>
    <property type="match status" value="1"/>
</dbReference>
<dbReference type="PANTHER" id="PTHR21087:SF21">
    <property type="entry name" value="SHIKIMATE KINASE 2"/>
    <property type="match status" value="1"/>
</dbReference>
<dbReference type="Pfam" id="PF01202">
    <property type="entry name" value="SKI"/>
    <property type="match status" value="1"/>
</dbReference>
<dbReference type="PRINTS" id="PR01100">
    <property type="entry name" value="SHIKIMTKNASE"/>
</dbReference>
<dbReference type="SUPFAM" id="SSF52540">
    <property type="entry name" value="P-loop containing nucleoside triphosphate hydrolases"/>
    <property type="match status" value="1"/>
</dbReference>
<dbReference type="PROSITE" id="PS01128">
    <property type="entry name" value="SHIKIMATE_KINASE"/>
    <property type="match status" value="1"/>
</dbReference>
<gene>
    <name type="primary">aroL</name>
    <name type="ordered locus">b0388</name>
    <name type="ordered locus">JW0379</name>
</gene>
<accession>P0A6E1</accession>
<accession>P08329</accession>
<accession>Q2MC37</accession>
<protein>
    <recommendedName>
        <fullName>Shikimate kinase 2</fullName>
        <shortName>SK 2</shortName>
        <ecNumber evidence="4">2.7.1.71</ecNumber>
    </recommendedName>
    <alternativeName>
        <fullName>Shikimate kinase II</fullName>
        <shortName>SKII</shortName>
    </alternativeName>
</protein>